<accession>G5E5X0</accession>
<name>LIMD1_BOVIN</name>
<comment type="function">
    <text evidence="1">Adapter or scaffold protein which participates in the assembly of numerous protein complexes and is involved in several cellular processes such as cell fate determination, cytoskeletal organization, repression of gene transcription, cell-cell adhesion, cell differentiation, proliferation and migration. Positively regulates microRNA (miRNA)-mediated gene silencing and is essential for P-body formation and integrity. Acts as a hypoxic regulator by bridging an association between the prolyl hydroxylases and VHL enabling efficient degradation of HIF1A. Acts as a transcriptional corepressor for SNAI1- and SNAI2/SLUG-dependent repression of E-cadherin transcription. Negatively regulates the Hippo signaling pathway and antagonizes phosphorylation of YAP1. Inhibits E2F-mediated transcription, and suppresses the expression of the majority of genes with E2F1-responsive elements. Regulates osteoblast development, function, differentiation and stress osteoclastogenesis. Enhances the ability of TRAF6 to activate adapter protein complex 1 (AP-1) and negatively regulates the canonical Wnt receptor signaling pathway in osteoblasts. May act as a tumor suppressor by inhibiting cell proliferation (By similarity).</text>
</comment>
<comment type="subunit">
    <text evidence="1">Interacts with SQSTM1 and RB1. Interacts with EIF4E, AGO1, AGO2, DCP2, DDX6, LATS1, LATS2, EGLN1/PHD2, EGLN2/PHD1 and EGLN3/PHD3. Interacts (via LIM zinc-binding 2) with VHL. Found in a complex composed of LIMD1, VHL, EGLN1/PHD2, ELOB and CUL2. Found in a complex with TRAF6, PRKCZ and SQSTM1. Interacts (via LIM domains) with TRAF6. Interacts (via LIM domains) with SNAI1 (via SNAG domain), SNAI2/SLUG (via SNAG domain) and SCRT1 (via SNAG domain) (By similarity).</text>
</comment>
<comment type="subcellular location">
    <subcellularLocation>
        <location evidence="1">Cytoplasm</location>
    </subcellularLocation>
    <subcellularLocation>
        <location evidence="1">Nucleus</location>
    </subcellularLocation>
    <subcellularLocation>
        <location evidence="1">Cytoplasm</location>
        <location evidence="1">P-body</location>
    </subcellularLocation>
    <subcellularLocation>
        <location evidence="1">Cell junction</location>
        <location evidence="1">Adherens junction</location>
    </subcellularLocation>
    <subcellularLocation>
        <location evidence="1">Cell junction</location>
        <location evidence="1">Focal adhesion</location>
    </subcellularLocation>
    <text evidence="1">Shuttles between cytoplasm and nucleus but is localized predominantly to the cytoplasm. Found in the nucleus but not nucleoli. Colocalizes with VCL in the focal adhesions (By similarity).</text>
</comment>
<comment type="PTM">
    <text evidence="1">Phosphorylated during mitosis.</text>
</comment>
<comment type="similarity">
    <text evidence="6">Belongs to the zyxin/ajuba family.</text>
</comment>
<dbReference type="EMBL" id="DAAA02054514">
    <property type="status" value="NOT_ANNOTATED_CDS"/>
    <property type="molecule type" value="Genomic_DNA"/>
</dbReference>
<dbReference type="EMBL" id="DAAA02054515">
    <property type="status" value="NOT_ANNOTATED_CDS"/>
    <property type="molecule type" value="Genomic_DNA"/>
</dbReference>
<dbReference type="EMBL" id="DAAA02054516">
    <property type="status" value="NOT_ANNOTATED_CDS"/>
    <property type="molecule type" value="Genomic_DNA"/>
</dbReference>
<dbReference type="EMBL" id="DAAA02054517">
    <property type="status" value="NOT_ANNOTATED_CDS"/>
    <property type="molecule type" value="Genomic_DNA"/>
</dbReference>
<dbReference type="EMBL" id="DAAA02054518">
    <property type="status" value="NOT_ANNOTATED_CDS"/>
    <property type="molecule type" value="Genomic_DNA"/>
</dbReference>
<dbReference type="RefSeq" id="NP_001180092.1">
    <property type="nucleotide sequence ID" value="NM_001193163.1"/>
</dbReference>
<dbReference type="FunCoup" id="G5E5X0">
    <property type="interactions" value="663"/>
</dbReference>
<dbReference type="STRING" id="9913.ENSBTAP00000036851"/>
<dbReference type="iPTMnet" id="G5E5X0"/>
<dbReference type="PaxDb" id="9913-ENSBTAP00000036851"/>
<dbReference type="Ensembl" id="ENSBTAT00000037007.4">
    <property type="protein sequence ID" value="ENSBTAP00000036851.2"/>
    <property type="gene ID" value="ENSBTAG00000026097.4"/>
</dbReference>
<dbReference type="GeneID" id="617525"/>
<dbReference type="KEGG" id="bta:617525"/>
<dbReference type="CTD" id="8994"/>
<dbReference type="VEuPathDB" id="HostDB:ENSBTAG00000026097"/>
<dbReference type="VGNC" id="VGNC:30888">
    <property type="gene designation" value="LIMD1"/>
</dbReference>
<dbReference type="eggNOG" id="KOG1701">
    <property type="taxonomic scope" value="Eukaryota"/>
</dbReference>
<dbReference type="GeneTree" id="ENSGT00940000159019"/>
<dbReference type="HOGENOM" id="CLU_001357_11_1_1"/>
<dbReference type="InParanoid" id="G5E5X0"/>
<dbReference type="OMA" id="SCKEGPP"/>
<dbReference type="OrthoDB" id="25414at2759"/>
<dbReference type="TreeFam" id="TF320310"/>
<dbReference type="Reactome" id="R-BTA-1234176">
    <property type="pathway name" value="Oxygen-dependent proline hydroxylation of Hypoxia-inducible Factor Alpha"/>
</dbReference>
<dbReference type="Proteomes" id="UP000009136">
    <property type="component" value="Chromosome 22"/>
</dbReference>
<dbReference type="Bgee" id="ENSBTAG00000026097">
    <property type="expression patterns" value="Expressed in cardiac ventricle and 103 other cell types or tissues"/>
</dbReference>
<dbReference type="GO" id="GO:0005912">
    <property type="term" value="C:adherens junction"/>
    <property type="evidence" value="ECO:0000250"/>
    <property type="project" value="UniProtKB"/>
</dbReference>
<dbReference type="GO" id="GO:0005737">
    <property type="term" value="C:cytoplasm"/>
    <property type="evidence" value="ECO:0000250"/>
    <property type="project" value="UniProtKB"/>
</dbReference>
<dbReference type="GO" id="GO:0005925">
    <property type="term" value="C:focal adhesion"/>
    <property type="evidence" value="ECO:0000250"/>
    <property type="project" value="UniProtKB"/>
</dbReference>
<dbReference type="GO" id="GO:0005654">
    <property type="term" value="C:nucleoplasm"/>
    <property type="evidence" value="ECO:0007669"/>
    <property type="project" value="Ensembl"/>
</dbReference>
<dbReference type="GO" id="GO:0005634">
    <property type="term" value="C:nucleus"/>
    <property type="evidence" value="ECO:0000250"/>
    <property type="project" value="UniProtKB"/>
</dbReference>
<dbReference type="GO" id="GO:0000932">
    <property type="term" value="C:P-body"/>
    <property type="evidence" value="ECO:0000318"/>
    <property type="project" value="GO_Central"/>
</dbReference>
<dbReference type="GO" id="GO:0005886">
    <property type="term" value="C:plasma membrane"/>
    <property type="evidence" value="ECO:0007669"/>
    <property type="project" value="Ensembl"/>
</dbReference>
<dbReference type="GO" id="GO:0016442">
    <property type="term" value="C:RISC complex"/>
    <property type="evidence" value="ECO:0007669"/>
    <property type="project" value="Ensembl"/>
</dbReference>
<dbReference type="GO" id="GO:0005667">
    <property type="term" value="C:transcription regulator complex"/>
    <property type="evidence" value="ECO:0000318"/>
    <property type="project" value="GO_Central"/>
</dbReference>
<dbReference type="GO" id="GO:0046872">
    <property type="term" value="F:metal ion binding"/>
    <property type="evidence" value="ECO:0007669"/>
    <property type="project" value="UniProtKB-KW"/>
</dbReference>
<dbReference type="GO" id="GO:0003714">
    <property type="term" value="F:transcription corepressor activity"/>
    <property type="evidence" value="ECO:0000250"/>
    <property type="project" value="UniProtKB"/>
</dbReference>
<dbReference type="GO" id="GO:0016477">
    <property type="term" value="P:cell migration"/>
    <property type="evidence" value="ECO:0007669"/>
    <property type="project" value="Ensembl"/>
</dbReference>
<dbReference type="GO" id="GO:0007010">
    <property type="term" value="P:cytoskeleton organization"/>
    <property type="evidence" value="ECO:0000318"/>
    <property type="project" value="GO_Central"/>
</dbReference>
<dbReference type="GO" id="GO:0035278">
    <property type="term" value="P:miRNA-mediated gene silencing by inhibition of translation"/>
    <property type="evidence" value="ECO:0000250"/>
    <property type="project" value="UniProtKB"/>
</dbReference>
<dbReference type="GO" id="GO:0090090">
    <property type="term" value="P:negative regulation of canonical Wnt signaling pathway"/>
    <property type="evidence" value="ECO:0000250"/>
    <property type="project" value="UniProtKB"/>
</dbReference>
<dbReference type="GO" id="GO:0045892">
    <property type="term" value="P:negative regulation of DNA-templated transcription"/>
    <property type="evidence" value="ECO:0000250"/>
    <property type="project" value="UniProtKB"/>
</dbReference>
<dbReference type="GO" id="GO:0035331">
    <property type="term" value="P:negative regulation of hippo signaling"/>
    <property type="evidence" value="ECO:0000250"/>
    <property type="project" value="UniProtKB"/>
</dbReference>
<dbReference type="GO" id="GO:0045668">
    <property type="term" value="P:negative regulation of osteoblast differentiation"/>
    <property type="evidence" value="ECO:0000250"/>
    <property type="project" value="UniProtKB"/>
</dbReference>
<dbReference type="GO" id="GO:0002076">
    <property type="term" value="P:osteoblast development"/>
    <property type="evidence" value="ECO:0000250"/>
    <property type="project" value="UniProtKB"/>
</dbReference>
<dbReference type="GO" id="GO:0033962">
    <property type="term" value="P:P-body assembly"/>
    <property type="evidence" value="ECO:0007669"/>
    <property type="project" value="Ensembl"/>
</dbReference>
<dbReference type="GO" id="GO:0016310">
    <property type="term" value="P:phosphorylation"/>
    <property type="evidence" value="ECO:0000250"/>
    <property type="project" value="UniProtKB"/>
</dbReference>
<dbReference type="GO" id="GO:0008360">
    <property type="term" value="P:regulation of cell shape"/>
    <property type="evidence" value="ECO:0007669"/>
    <property type="project" value="Ensembl"/>
</dbReference>
<dbReference type="GO" id="GO:0006355">
    <property type="term" value="P:regulation of DNA-templated transcription"/>
    <property type="evidence" value="ECO:0000318"/>
    <property type="project" value="GO_Central"/>
</dbReference>
<dbReference type="GO" id="GO:0001666">
    <property type="term" value="P:response to hypoxia"/>
    <property type="evidence" value="ECO:0000250"/>
    <property type="project" value="UniProtKB"/>
</dbReference>
<dbReference type="CDD" id="cd09352">
    <property type="entry name" value="LIM1_Ajuba_like"/>
    <property type="match status" value="1"/>
</dbReference>
<dbReference type="CDD" id="cd09355">
    <property type="entry name" value="LIM2_Ajuba_like"/>
    <property type="match status" value="1"/>
</dbReference>
<dbReference type="CDD" id="cd09438">
    <property type="entry name" value="LIM3_Ajuba_like"/>
    <property type="match status" value="1"/>
</dbReference>
<dbReference type="FunFam" id="2.10.110.10:FF:000028">
    <property type="entry name" value="LIM domain-containing protein 1"/>
    <property type="match status" value="1"/>
</dbReference>
<dbReference type="FunFam" id="2.10.110.10:FF:000036">
    <property type="entry name" value="LIM domain-containing protein 1"/>
    <property type="match status" value="1"/>
</dbReference>
<dbReference type="FunFam" id="2.10.110.10:FF:000037">
    <property type="entry name" value="LIM domain-containing protein 1"/>
    <property type="match status" value="1"/>
</dbReference>
<dbReference type="Gene3D" id="2.10.110.10">
    <property type="entry name" value="Cysteine Rich Protein"/>
    <property type="match status" value="3"/>
</dbReference>
<dbReference type="InterPro" id="IPR047172">
    <property type="entry name" value="Ajuba-like"/>
</dbReference>
<dbReference type="InterPro" id="IPR047245">
    <property type="entry name" value="Ajuba-like_LIM1"/>
</dbReference>
<dbReference type="InterPro" id="IPR047247">
    <property type="entry name" value="Ajuba-like_LIM2"/>
</dbReference>
<dbReference type="InterPro" id="IPR047248">
    <property type="entry name" value="Ajuba-like_LIM3"/>
</dbReference>
<dbReference type="InterPro" id="IPR001781">
    <property type="entry name" value="Znf_LIM"/>
</dbReference>
<dbReference type="PANTHER" id="PTHR24219:SF3">
    <property type="entry name" value="LIM DOMAIN-CONTAINING PROTEIN 1"/>
    <property type="match status" value="1"/>
</dbReference>
<dbReference type="PANTHER" id="PTHR24219">
    <property type="entry name" value="LIM DOMAIN-CONTAINING PROTEIN JUB"/>
    <property type="match status" value="1"/>
</dbReference>
<dbReference type="Pfam" id="PF00412">
    <property type="entry name" value="LIM"/>
    <property type="match status" value="3"/>
</dbReference>
<dbReference type="SMART" id="SM00132">
    <property type="entry name" value="LIM"/>
    <property type="match status" value="3"/>
</dbReference>
<dbReference type="SUPFAM" id="SSF57716">
    <property type="entry name" value="Glucocorticoid receptor-like (DNA-binding domain)"/>
    <property type="match status" value="2"/>
</dbReference>
<dbReference type="PROSITE" id="PS00478">
    <property type="entry name" value="LIM_DOMAIN_1"/>
    <property type="match status" value="2"/>
</dbReference>
<dbReference type="PROSITE" id="PS50023">
    <property type="entry name" value="LIM_DOMAIN_2"/>
    <property type="match status" value="3"/>
</dbReference>
<gene>
    <name type="primary">LIMD1</name>
</gene>
<organism>
    <name type="scientific">Bos taurus</name>
    <name type="common">Bovine</name>
    <dbReference type="NCBI Taxonomy" id="9913"/>
    <lineage>
        <taxon>Eukaryota</taxon>
        <taxon>Metazoa</taxon>
        <taxon>Chordata</taxon>
        <taxon>Craniata</taxon>
        <taxon>Vertebrata</taxon>
        <taxon>Euteleostomi</taxon>
        <taxon>Mammalia</taxon>
        <taxon>Eutheria</taxon>
        <taxon>Laurasiatheria</taxon>
        <taxon>Artiodactyla</taxon>
        <taxon>Ruminantia</taxon>
        <taxon>Pecora</taxon>
        <taxon>Bovidae</taxon>
        <taxon>Bovinae</taxon>
        <taxon>Bos</taxon>
    </lineage>
</organism>
<evidence type="ECO:0000250" key="1"/>
<evidence type="ECO:0000250" key="2">
    <source>
        <dbReference type="UniProtKB" id="B5DEH0"/>
    </source>
</evidence>
<evidence type="ECO:0000250" key="3">
    <source>
        <dbReference type="UniProtKB" id="Q9UGP4"/>
    </source>
</evidence>
<evidence type="ECO:0000255" key="4">
    <source>
        <dbReference type="PROSITE-ProRule" id="PRU00125"/>
    </source>
</evidence>
<evidence type="ECO:0000256" key="5">
    <source>
        <dbReference type="SAM" id="MobiDB-lite"/>
    </source>
</evidence>
<evidence type="ECO:0000305" key="6"/>
<sequence length="674" mass="71885">MDKYDDLGLEASKFIEDLNMYEASKDGLFRVDKGAGNNPEFEETRRVFATKMAKIHLQQQQQQQLLQEETLPRASRGPINGGARLGPPAHREAGGGSKLAADGAAKPPLAASTVAPGTTITVAPGQPSYPPQEQRAKLYVRGSRQGSQDCGSKESMVNSEMSAFHRPGPCEDPSCLTHGDYYDNLSLAGPKWADDPGVSPGIRLGVGSGWSGTPGSDPLLSKPSRDPHLYHQQLSAGSGRSLQSGQDGGPGGGNSEKPAGVWTTASSQRVSPGLPSAGPENGALPRSAQPRTPSFSAPLALNRPSQGSLPRTNSGVGSEVSGTMPKPTVDPQPWFQDGPKSYLSSSAPSSSPASMDHMQAGALPGLGPKPGSTDPGIGPKLSPNSLVHPVMSTLPELSCKEGASSWASDGSLGPVLPETPSSPRVRLPCQTLIPGPELGPTAAELKLEALTQRLEREMDAHPKADYFGACVKCSKGVFGAGQACQAMGNLYHDACFTCAACSRKLRGKAFYFVNGKVFCEEDFLYSGFQQSADRCFLCGHLIMDMILQALGKSYHPGCFRCVICNECLDGVPFTVDSENKIYCVRDYHKVLAPKCAACGLPILPPEGSDETIRVVSMDRDYHVECYHCEDCGLELNDEDGHRCYPLEDHLFCHSCHVKRLEKGPSPAALRQHHF</sequence>
<keyword id="KW-0965">Cell junction</keyword>
<keyword id="KW-0963">Cytoplasm</keyword>
<keyword id="KW-0440">LIM domain</keyword>
<keyword id="KW-0479">Metal-binding</keyword>
<keyword id="KW-0539">Nucleus</keyword>
<keyword id="KW-0597">Phosphoprotein</keyword>
<keyword id="KW-1185">Reference proteome</keyword>
<keyword id="KW-0677">Repeat</keyword>
<keyword id="KW-0678">Repressor</keyword>
<keyword id="KW-0943">RNA-mediated gene silencing</keyword>
<keyword id="KW-0804">Transcription</keyword>
<keyword id="KW-0805">Transcription regulation</keyword>
<keyword id="KW-0043">Tumor suppressor</keyword>
<keyword id="KW-0862">Zinc</keyword>
<proteinExistence type="inferred from homology"/>
<feature type="chain" id="PRO_0000416960" description="LIM domain-containing protein 1">
    <location>
        <begin position="1"/>
        <end position="674"/>
    </location>
</feature>
<feature type="domain" description="LIM zinc-binding 1" evidence="4">
    <location>
        <begin position="468"/>
        <end position="529"/>
    </location>
</feature>
<feature type="domain" description="LIM zinc-binding 2" evidence="4">
    <location>
        <begin position="533"/>
        <end position="593"/>
    </location>
</feature>
<feature type="domain" description="LIM zinc-binding 3" evidence="4">
    <location>
        <begin position="594"/>
        <end position="662"/>
    </location>
</feature>
<feature type="region of interest" description="Mediates nuclear export" evidence="1">
    <location>
        <begin position="54"/>
        <end position="136"/>
    </location>
</feature>
<feature type="region of interest" description="Disordered" evidence="5">
    <location>
        <begin position="73"/>
        <end position="109"/>
    </location>
</feature>
<feature type="region of interest" description="Disordered" evidence="5">
    <location>
        <begin position="142"/>
        <end position="165"/>
    </location>
</feature>
<feature type="region of interest" description="Interaction with EGLN1/PHD2" evidence="1">
    <location>
        <begin position="188"/>
        <end position="259"/>
    </location>
</feature>
<feature type="region of interest" description="Disordered" evidence="5">
    <location>
        <begin position="204"/>
        <end position="388"/>
    </location>
</feature>
<feature type="region of interest" description="Interaction with RB1" evidence="1">
    <location>
        <begin position="402"/>
        <end position="440"/>
    </location>
</feature>
<feature type="region of interest" description="Necessary for nuclear localization" evidence="1">
    <location>
        <begin position="470"/>
        <end position="674"/>
    </location>
</feature>
<feature type="compositionally biased region" description="Low complexity" evidence="5">
    <location>
        <begin position="98"/>
        <end position="109"/>
    </location>
</feature>
<feature type="compositionally biased region" description="Polar residues" evidence="5">
    <location>
        <begin position="144"/>
        <end position="161"/>
    </location>
</feature>
<feature type="compositionally biased region" description="Polar residues" evidence="5">
    <location>
        <begin position="232"/>
        <end position="244"/>
    </location>
</feature>
<feature type="compositionally biased region" description="Polar residues" evidence="5">
    <location>
        <begin position="303"/>
        <end position="316"/>
    </location>
</feature>
<feature type="compositionally biased region" description="Low complexity" evidence="5">
    <location>
        <begin position="344"/>
        <end position="371"/>
    </location>
</feature>
<feature type="modified residue" description="Phosphoserine" evidence="3">
    <location>
        <position position="147"/>
    </location>
</feature>
<feature type="modified residue" description="Phosphoserine" evidence="3">
    <location>
        <position position="235"/>
    </location>
</feature>
<feature type="modified residue" description="Phosphoserine" evidence="2">
    <location>
        <position position="241"/>
    </location>
</feature>
<feature type="modified residue" description="Phosphoserine" evidence="3">
    <location>
        <position position="271"/>
    </location>
</feature>
<feature type="modified residue" description="Phosphoserine" evidence="3">
    <location>
        <position position="276"/>
    </location>
</feature>
<feature type="modified residue" description="Phosphoserine" evidence="2">
    <location>
        <position position="314"/>
    </location>
</feature>
<feature type="modified residue" description="Phosphoserine" evidence="3">
    <location>
        <position position="422"/>
    </location>
</feature>
<protein>
    <recommendedName>
        <fullName>LIM domain-containing protein 1</fullName>
    </recommendedName>
</protein>
<reference key="1">
    <citation type="journal article" date="2009" name="Genome Biol.">
        <title>A whole-genome assembly of the domestic cow, Bos taurus.</title>
        <authorList>
            <person name="Zimin A.V."/>
            <person name="Delcher A.L."/>
            <person name="Florea L."/>
            <person name="Kelley D.R."/>
            <person name="Schatz M.C."/>
            <person name="Puiu D."/>
            <person name="Hanrahan F."/>
            <person name="Pertea G."/>
            <person name="Van Tassell C.P."/>
            <person name="Sonstegard T.S."/>
            <person name="Marcais G."/>
            <person name="Roberts M."/>
            <person name="Subramanian P."/>
            <person name="Yorke J.A."/>
            <person name="Salzberg S.L."/>
        </authorList>
    </citation>
    <scope>NUCLEOTIDE SEQUENCE [LARGE SCALE GENOMIC DNA]</scope>
    <source>
        <strain>Hereford</strain>
    </source>
</reference>